<name>VP8_BTV1A</name>
<protein>
    <recommendedName>
        <fullName>Non-structural protein P8</fullName>
    </recommendedName>
    <alternativeName>
        <fullName>Non-structural protein NS3</fullName>
    </alternativeName>
    <component>
        <recommendedName>
            <fullName>Non-structural protein NS3A</fullName>
        </recommendedName>
    </component>
</protein>
<comment type="function">
    <text evidence="1">Plays a role in the inhibition of host innate immune response. Interacts with host OPTN and thus inhibits the recruitment of TBK1 to the host Golgi apparatus. In turn, downstream partner IRF3 cannot be activated and IFN-beta production is impaired.</text>
</comment>
<comment type="function">
    <text evidence="1">Facilitates viral particle release either by increasing plasma membrane permeability through a viroporin-like activity or by viral budding.</text>
</comment>
<comment type="subunit">
    <text evidence="1">Forms homooligomers via coiled-coil motif. Interacts with host OPTN; this interaction inhibits innate immune response.</text>
</comment>
<comment type="subcellular location">
    <subcellularLocation>
        <location evidence="1">Host cell membrane</location>
        <topology evidence="2">Multi-pass membrane protein</topology>
    </subcellularLocation>
    <subcellularLocation>
        <location evidence="1">Host Golgi apparatus</location>
    </subcellularLocation>
</comment>
<comment type="similarity">
    <text evidence="3">Belongs to the orbivirus NS3 family.</text>
</comment>
<feature type="chain" id="PRO_0000040622" description="Non-structural protein P8">
    <location>
        <begin position="1"/>
        <end position="229"/>
    </location>
</feature>
<feature type="chain" id="PRO_0000040623" description="Non-structural protein NS3A">
    <location>
        <begin position="14"/>
        <end position="229"/>
    </location>
</feature>
<feature type="transmembrane region" description="Helical" evidence="2">
    <location>
        <begin position="119"/>
        <end position="139"/>
    </location>
</feature>
<feature type="transmembrane region" description="Helical" evidence="2">
    <location>
        <begin position="162"/>
        <end position="182"/>
    </location>
</feature>
<evidence type="ECO:0000250" key="1">
    <source>
        <dbReference type="UniProtKB" id="P08363"/>
    </source>
</evidence>
<evidence type="ECO:0000255" key="2"/>
<evidence type="ECO:0000305" key="3"/>
<proteinExistence type="inferred from homology"/>
<organism>
    <name type="scientific">Bluetongue virus 1 (isolate Australia)</name>
    <name type="common">BTV 1</name>
    <dbReference type="NCBI Taxonomy" id="10904"/>
    <lineage>
        <taxon>Viruses</taxon>
        <taxon>Riboviria</taxon>
        <taxon>Orthornavirae</taxon>
        <taxon>Duplornaviricota</taxon>
        <taxon>Resentoviricetes</taxon>
        <taxon>Reovirales</taxon>
        <taxon>Sedoreoviridae</taxon>
        <taxon>Orbivirus</taxon>
        <taxon>Bluetongue virus</taxon>
    </lineage>
</organism>
<organismHost>
    <name type="scientific">Antilocapra americana</name>
    <name type="common">Pronghorn</name>
    <dbReference type="NCBI Taxonomy" id="9891"/>
</organismHost>
<organismHost>
    <name type="scientific">Bos taurus</name>
    <name type="common">Bovine</name>
    <dbReference type="NCBI Taxonomy" id="9913"/>
</organismHost>
<organismHost>
    <name type="scientific">Capra hircus</name>
    <name type="common">Goat</name>
    <dbReference type="NCBI Taxonomy" id="9925"/>
</organismHost>
<organismHost>
    <name type="scientific">Culicoides variipennis</name>
    <name type="common">Biting midge</name>
    <dbReference type="NCBI Taxonomy" id="46212"/>
</organismHost>
<organismHost>
    <name type="scientific">Ovis aries</name>
    <name type="common">Sheep</name>
    <dbReference type="NCBI Taxonomy" id="9940"/>
</organismHost>
<reference key="1">
    <citation type="journal article" date="1988" name="J. Gen. Virol.">
        <title>Nucleotide sequence of the Australian bluetongue virus serotype 1 RNA segment 10.</title>
        <authorList>
            <person name="Gould A.R."/>
        </authorList>
    </citation>
    <scope>NUCLEOTIDE SEQUENCE [GENOMIC RNA]</scope>
</reference>
<keyword id="KW-1032">Host cell membrane</keyword>
<keyword id="KW-1040">Host Golgi apparatus</keyword>
<keyword id="KW-1043">Host membrane</keyword>
<keyword id="KW-0945">Host-virus interaction</keyword>
<keyword id="KW-1090">Inhibition of host innate immune response by virus</keyword>
<keyword id="KW-0472">Membrane</keyword>
<keyword id="KW-0812">Transmembrane</keyword>
<keyword id="KW-1133">Transmembrane helix</keyword>
<keyword id="KW-0899">Viral immunoevasion</keyword>
<dbReference type="EMBL" id="D00253">
    <property type="protein sequence ID" value="BAA00184.1"/>
    <property type="molecule type" value="Genomic_RNA"/>
</dbReference>
<dbReference type="EMBL" id="D00253">
    <property type="protein sequence ID" value="BAA00185.1"/>
    <property type="molecule type" value="Genomic_RNA"/>
</dbReference>
<dbReference type="PIR" id="A28600">
    <property type="entry name" value="P8XRAU"/>
</dbReference>
<dbReference type="GO" id="GO:0044177">
    <property type="term" value="C:host cell Golgi apparatus"/>
    <property type="evidence" value="ECO:0007669"/>
    <property type="project" value="UniProtKB-SubCell"/>
</dbReference>
<dbReference type="GO" id="GO:0020002">
    <property type="term" value="C:host cell plasma membrane"/>
    <property type="evidence" value="ECO:0007669"/>
    <property type="project" value="UniProtKB-SubCell"/>
</dbReference>
<dbReference type="GO" id="GO:0016020">
    <property type="term" value="C:membrane"/>
    <property type="evidence" value="ECO:0007669"/>
    <property type="project" value="UniProtKB-KW"/>
</dbReference>
<dbReference type="GO" id="GO:0052170">
    <property type="term" value="P:symbiont-mediated suppression of host innate immune response"/>
    <property type="evidence" value="ECO:0007669"/>
    <property type="project" value="UniProtKB-KW"/>
</dbReference>
<dbReference type="InterPro" id="IPR002565">
    <property type="entry name" value="Orbi_NS3"/>
</dbReference>
<dbReference type="Pfam" id="PF01616">
    <property type="entry name" value="Orbi_NS3"/>
    <property type="match status" value="1"/>
</dbReference>
<gene>
    <name type="primary">Segment-10</name>
</gene>
<accession>P13841</accession>
<accession>Q65733</accession>
<sequence length="229" mass="25502">MLSGLIQRFEEEKMKHNQERVEELSLVRVDDTISQPPRYAPSAPMPSSMPTVALEILDKAMSNTTGATQTQKAEKAAFASYAEAFRDDVRLRQINRHVNEQIFPKLKSDLGGLKKKRAIIHMTLLVAAVVALLTSVCTLSSDMSVAFKLNGTSAEIPQWFKSLNPMLGVVNLGATFIMMVCAKSERGLNQQIDMIKKEVMKKQSYNDAVRMSFTEFSSVPLDGFELPLT</sequence>